<keyword id="KW-0963">Cytoplasm</keyword>
<keyword id="KW-0456">Lyase</keyword>
<keyword id="KW-0585">Phenylalanine catabolism</keyword>
<keyword id="KW-0587">Phenylpropanoid metabolism</keyword>
<keyword id="KW-1185">Reference proteome</keyword>
<name>PAL5_SOLLC</name>
<accession>P26600</accession>
<sequence length="721" mass="78496">MASSIVQNGHVNGEAMDLCKKSINVNDPLNWEMAAESLRGSHLDEVKKMVDEFRKPIVKLGGETLTVAQVASIANVDNKSNGVKVELSESARAGVKASSDWVMDSMGKGTDSYGVTTGFGATSHRRTKNGGALQKELIRFLNAGVFGNGTESSHTLPHSATRAAMLVRINTLLQGYSGIRFEILEAITKLINSNITPCLPLRGTITASGDLVPLSYIAGLLTGRPNSKAVGPNGEKLNAEERFRVAGVTSGFFELQPKEGLALVNGTAVGSGMASMVLFESNILAVMSEVLSAIFAEVMNGKPEFTDYLTHKLKHHPGQIEAAAIMEHILDGSSYVKAAQKLHEMDPLQKPKQDRYALRTSPQWLGPQIEVIRAATKMIEREINSVNDNPLIDVSRNKALHGGNFQGTPIGVSMDNTRLALASIGKLMFAQFSELVNDYYNNGLPLNLTAGRNPSLDYGLKGAEIAMASYCSELQFLANPVTNHVQSAEQHNQDVNSLGLISARKTAEAVDILKLMSSTYLVALCQAIDLRHLEENLKNAVKNTVSQVAKKTLAMGANGELHPARFCEKELLQVVEREYLFTYADDPCSSTYPLMQKLRQVLVDHAMKNGESEKNLNSSIFQKIVAFEDELKAVLPKEVESARAVVESGNPAIPNRITECRSYPLYRLVRQEVGTELLTGEKVRSPGEEIDKVFTAFCNGQIIDPLLECLKSWNGAPIPIC</sequence>
<evidence type="ECO:0000250" key="1">
    <source>
        <dbReference type="UniProtKB" id="P11544"/>
    </source>
</evidence>
<evidence type="ECO:0000250" key="2">
    <source>
        <dbReference type="UniProtKB" id="P24481"/>
    </source>
</evidence>
<evidence type="ECO:0000250" key="3">
    <source>
        <dbReference type="UniProtKB" id="Q68G84"/>
    </source>
</evidence>
<evidence type="ECO:0000255" key="4">
    <source>
        <dbReference type="PROSITE-ProRule" id="PRU10122"/>
    </source>
</evidence>
<evidence type="ECO:0000305" key="5"/>
<organism>
    <name type="scientific">Solanum lycopersicum</name>
    <name type="common">Tomato</name>
    <name type="synonym">Lycopersicon esculentum</name>
    <dbReference type="NCBI Taxonomy" id="4081"/>
    <lineage>
        <taxon>Eukaryota</taxon>
        <taxon>Viridiplantae</taxon>
        <taxon>Streptophyta</taxon>
        <taxon>Embryophyta</taxon>
        <taxon>Tracheophyta</taxon>
        <taxon>Spermatophyta</taxon>
        <taxon>Magnoliopsida</taxon>
        <taxon>eudicotyledons</taxon>
        <taxon>Gunneridae</taxon>
        <taxon>Pentapetalae</taxon>
        <taxon>asterids</taxon>
        <taxon>lamiids</taxon>
        <taxon>Solanales</taxon>
        <taxon>Solanaceae</taxon>
        <taxon>Solanoideae</taxon>
        <taxon>Solaneae</taxon>
        <taxon>Solanum</taxon>
        <taxon>Solanum subgen. Lycopersicon</taxon>
    </lineage>
</organism>
<gene>
    <name type="primary">PAL5</name>
</gene>
<reference key="1">
    <citation type="journal article" date="1992" name="J. Biol. Chem.">
        <title>Truncated phenylalanine ammonia-lyase expression in tomato (Lycopersicon esculentum).</title>
        <authorList>
            <person name="Lee S.-W."/>
            <person name="Robb E.J."/>
            <person name="Nazar R.N."/>
        </authorList>
    </citation>
    <scope>NUCLEOTIDE SEQUENCE [GENOMIC DNA]</scope>
    <source>
        <strain>cv. Bonny Best</strain>
    </source>
</reference>
<feature type="chain" id="PRO_0000215398" description="Phenylalanine ammonia-lyase">
    <location>
        <begin position="1"/>
        <end position="721"/>
    </location>
</feature>
<feature type="active site" description="Proton donor/acceptor" evidence="3">
    <location>
        <position position="113"/>
    </location>
</feature>
<feature type="binding site" evidence="3">
    <location>
        <position position="265"/>
    </location>
    <ligand>
        <name>(E)-cinnamate</name>
        <dbReference type="ChEBI" id="CHEBI:15669"/>
    </ligand>
</feature>
<feature type="binding site" evidence="3">
    <location>
        <position position="353"/>
    </location>
    <ligand>
        <name>(E)-cinnamate</name>
        <dbReference type="ChEBI" id="CHEBI:15669"/>
    </ligand>
</feature>
<feature type="binding site" evidence="3">
    <location>
        <position position="359"/>
    </location>
    <ligand>
        <name>(E)-cinnamate</name>
        <dbReference type="ChEBI" id="CHEBI:15669"/>
    </ligand>
</feature>
<feature type="binding site" evidence="3">
    <location>
        <position position="389"/>
    </location>
    <ligand>
        <name>(E)-cinnamate</name>
        <dbReference type="ChEBI" id="CHEBI:15669"/>
    </ligand>
</feature>
<feature type="binding site" evidence="1">
    <location>
        <position position="461"/>
    </location>
    <ligand>
        <name>(E)-cinnamate</name>
        <dbReference type="ChEBI" id="CHEBI:15669"/>
    </ligand>
</feature>
<feature type="binding site" evidence="1">
    <location>
        <position position="489"/>
    </location>
    <ligand>
        <name>(E)-cinnamate</name>
        <dbReference type="ChEBI" id="CHEBI:15669"/>
    </ligand>
</feature>
<feature type="binding site" evidence="3">
    <location>
        <position position="492"/>
    </location>
    <ligand>
        <name>(E)-cinnamate</name>
        <dbReference type="ChEBI" id="CHEBI:15669"/>
    </ligand>
</feature>
<feature type="modified residue" description="2,3-didehydroalanine (Ser)" evidence="4">
    <location>
        <position position="208"/>
    </location>
</feature>
<feature type="cross-link" description="5-imidazolinone (Ala-Gly)" evidence="3">
    <location>
        <begin position="207"/>
        <end position="209"/>
    </location>
</feature>
<proteinExistence type="inferred from homology"/>
<protein>
    <recommendedName>
        <fullName>Phenylalanine ammonia-lyase</fullName>
        <shortName>PAL</shortName>
        <ecNumber evidence="2">4.3.1.24</ecNumber>
    </recommendedName>
</protein>
<dbReference type="EC" id="4.3.1.24" evidence="2"/>
<dbReference type="EMBL" id="M90692">
    <property type="protein sequence ID" value="AAA34176.1"/>
    <property type="molecule type" value="Genomic_DNA"/>
</dbReference>
<dbReference type="PIR" id="A44133">
    <property type="entry name" value="A44133"/>
</dbReference>
<dbReference type="SMR" id="P26600"/>
<dbReference type="FunCoup" id="P26600">
    <property type="interactions" value="344"/>
</dbReference>
<dbReference type="STRING" id="4081.P26600"/>
<dbReference type="PaxDb" id="4081-Solyc09g007910.2.1"/>
<dbReference type="eggNOG" id="KOG0222">
    <property type="taxonomic scope" value="Eukaryota"/>
</dbReference>
<dbReference type="InParanoid" id="P26600"/>
<dbReference type="UniPathway" id="UPA00713">
    <property type="reaction ID" value="UER00725"/>
</dbReference>
<dbReference type="Proteomes" id="UP000004994">
    <property type="component" value="Unplaced"/>
</dbReference>
<dbReference type="ExpressionAtlas" id="P26600">
    <property type="expression patterns" value="baseline and differential"/>
</dbReference>
<dbReference type="GO" id="GO:0005737">
    <property type="term" value="C:cytoplasm"/>
    <property type="evidence" value="ECO:0007669"/>
    <property type="project" value="UniProtKB-SubCell"/>
</dbReference>
<dbReference type="GO" id="GO:0032991">
    <property type="term" value="C:protein-containing complex"/>
    <property type="evidence" value="ECO:0000304"/>
    <property type="project" value="AgBase"/>
</dbReference>
<dbReference type="GO" id="GO:0016841">
    <property type="term" value="F:ammonia-lyase activity"/>
    <property type="evidence" value="ECO:0000318"/>
    <property type="project" value="GO_Central"/>
</dbReference>
<dbReference type="GO" id="GO:0045548">
    <property type="term" value="F:phenylalanine ammonia-lyase activity"/>
    <property type="evidence" value="ECO:0007669"/>
    <property type="project" value="UniProtKB-EC"/>
</dbReference>
<dbReference type="GO" id="GO:0009800">
    <property type="term" value="P:cinnamic acid biosynthetic process"/>
    <property type="evidence" value="ECO:0007669"/>
    <property type="project" value="UniProtKB-UniPathway"/>
</dbReference>
<dbReference type="GO" id="GO:0006559">
    <property type="term" value="P:L-phenylalanine catabolic process"/>
    <property type="evidence" value="ECO:0007669"/>
    <property type="project" value="UniProtKB-KW"/>
</dbReference>
<dbReference type="CDD" id="cd00332">
    <property type="entry name" value="PAL-HAL"/>
    <property type="match status" value="1"/>
</dbReference>
<dbReference type="FunFam" id="1.10.274.20:FF:000001">
    <property type="entry name" value="Phenylalanine ammonia-lyase"/>
    <property type="match status" value="1"/>
</dbReference>
<dbReference type="FunFam" id="1.10.275.10:FF:000009">
    <property type="entry name" value="Phenylalanine ammonia-lyase"/>
    <property type="match status" value="1"/>
</dbReference>
<dbReference type="FunFam" id="1.20.200.10:FF:000009">
    <property type="entry name" value="Phenylalanine ammonia-lyase"/>
    <property type="match status" value="1"/>
</dbReference>
<dbReference type="Gene3D" id="1.20.200.10">
    <property type="entry name" value="Fumarase/aspartase (Central domain)"/>
    <property type="match status" value="1"/>
</dbReference>
<dbReference type="Gene3D" id="1.10.275.10">
    <property type="entry name" value="Fumarase/aspartase (N-terminal domain)"/>
    <property type="match status" value="1"/>
</dbReference>
<dbReference type="Gene3D" id="1.10.274.20">
    <property type="entry name" value="Phenylalanine ammonia-lyase 1, domain 3"/>
    <property type="match status" value="1"/>
</dbReference>
<dbReference type="InterPro" id="IPR001106">
    <property type="entry name" value="Aromatic_Lyase"/>
</dbReference>
<dbReference type="InterPro" id="IPR024083">
    <property type="entry name" value="Fumarase/histidase_N"/>
</dbReference>
<dbReference type="InterPro" id="IPR008948">
    <property type="entry name" value="L-Aspartase-like"/>
</dbReference>
<dbReference type="InterPro" id="IPR022313">
    <property type="entry name" value="Phe/His_NH3-lyase_AS"/>
</dbReference>
<dbReference type="InterPro" id="IPR005922">
    <property type="entry name" value="Phe_NH3-lyase"/>
</dbReference>
<dbReference type="InterPro" id="IPR023144">
    <property type="entry name" value="Phe_NH3-lyase_shielding_dom_sf"/>
</dbReference>
<dbReference type="NCBIfam" id="TIGR01226">
    <property type="entry name" value="phe_am_lyase"/>
    <property type="match status" value="1"/>
</dbReference>
<dbReference type="PANTHER" id="PTHR10362">
    <property type="entry name" value="HISTIDINE AMMONIA-LYASE"/>
    <property type="match status" value="1"/>
</dbReference>
<dbReference type="Pfam" id="PF00221">
    <property type="entry name" value="Lyase_aromatic"/>
    <property type="match status" value="1"/>
</dbReference>
<dbReference type="SUPFAM" id="SSF48557">
    <property type="entry name" value="L-aspartase-like"/>
    <property type="match status" value="1"/>
</dbReference>
<dbReference type="PROSITE" id="PS00488">
    <property type="entry name" value="PAL_HISTIDASE"/>
    <property type="match status" value="1"/>
</dbReference>
<comment type="function">
    <text evidence="2">This is a key enzyme of plant metabolism catalyzing the first reaction in the biosynthesis from L-phenylalanine of a wide variety of natural products based on the phenylpropane skeleton.</text>
</comment>
<comment type="catalytic activity">
    <reaction evidence="2">
        <text>L-phenylalanine = (E)-cinnamate + NH4(+)</text>
        <dbReference type="Rhea" id="RHEA:21384"/>
        <dbReference type="ChEBI" id="CHEBI:15669"/>
        <dbReference type="ChEBI" id="CHEBI:28938"/>
        <dbReference type="ChEBI" id="CHEBI:58095"/>
        <dbReference type="EC" id="4.3.1.24"/>
    </reaction>
</comment>
<comment type="pathway">
    <text evidence="5">Phenylpropanoid metabolism; trans-cinnamate biosynthesis; trans-cinnamate from L-phenylalanine: step 1/1.</text>
</comment>
<comment type="subunit">
    <text evidence="2">Homotetramer.</text>
</comment>
<comment type="subcellular location">
    <subcellularLocation>
        <location evidence="5">Cytoplasm</location>
    </subcellularLocation>
</comment>
<comment type="PTM">
    <text evidence="3">Contains an active site 4-methylidene-imidazol-5-one (MIO), which is formed autocatalytically by cyclization and dehydration of residues Ala-Ser-Gly.</text>
</comment>
<comment type="similarity">
    <text evidence="5">Belongs to the PAL/histidase family.</text>
</comment>